<organism>
    <name type="scientific">Mycolicibacterium vanbaalenii (strain DSM 7251 / JCM 13017 / BCRC 16820 / KCTC 9966 / NRRL B-24157 / PYR-1)</name>
    <name type="common">Mycobacterium vanbaalenii</name>
    <dbReference type="NCBI Taxonomy" id="350058"/>
    <lineage>
        <taxon>Bacteria</taxon>
        <taxon>Bacillati</taxon>
        <taxon>Actinomycetota</taxon>
        <taxon>Actinomycetes</taxon>
        <taxon>Mycobacteriales</taxon>
        <taxon>Mycobacteriaceae</taxon>
        <taxon>Mycolicibacterium</taxon>
    </lineage>
</organism>
<comment type="catalytic activity">
    <reaction evidence="1">
        <text>urea + 2 H2O + H(+) = hydrogencarbonate + 2 NH4(+)</text>
        <dbReference type="Rhea" id="RHEA:20557"/>
        <dbReference type="ChEBI" id="CHEBI:15377"/>
        <dbReference type="ChEBI" id="CHEBI:15378"/>
        <dbReference type="ChEBI" id="CHEBI:16199"/>
        <dbReference type="ChEBI" id="CHEBI:17544"/>
        <dbReference type="ChEBI" id="CHEBI:28938"/>
        <dbReference type="EC" id="3.5.1.5"/>
    </reaction>
</comment>
<comment type="pathway">
    <text evidence="1">Nitrogen metabolism; urea degradation; CO(2) and NH(3) from urea (urease route): step 1/1.</text>
</comment>
<comment type="subunit">
    <text evidence="1">Heterotrimer of UreA (gamma), UreB (beta) and UreC (alpha) subunits. Three heterotrimers associate to form the active enzyme.</text>
</comment>
<comment type="subcellular location">
    <subcellularLocation>
        <location evidence="1">Cytoplasm</location>
    </subcellularLocation>
</comment>
<comment type="similarity">
    <text evidence="1">Belongs to the urease gamma subunit family.</text>
</comment>
<keyword id="KW-0963">Cytoplasm</keyword>
<keyword id="KW-0378">Hydrolase</keyword>
<dbReference type="EC" id="3.5.1.5" evidence="1"/>
<dbReference type="EMBL" id="CP000511">
    <property type="protein sequence ID" value="ABM13886.1"/>
    <property type="molecule type" value="Genomic_DNA"/>
</dbReference>
<dbReference type="RefSeq" id="WP_011780291.1">
    <property type="nucleotide sequence ID" value="NZ_JACKSD010000030.1"/>
</dbReference>
<dbReference type="SMR" id="A1T9N6"/>
<dbReference type="STRING" id="350058.Mvan_3084"/>
<dbReference type="KEGG" id="mva:Mvan_3084"/>
<dbReference type="eggNOG" id="COG0831">
    <property type="taxonomic scope" value="Bacteria"/>
</dbReference>
<dbReference type="HOGENOM" id="CLU_145825_1_0_11"/>
<dbReference type="UniPathway" id="UPA00258">
    <property type="reaction ID" value="UER00370"/>
</dbReference>
<dbReference type="Proteomes" id="UP000009159">
    <property type="component" value="Chromosome"/>
</dbReference>
<dbReference type="GO" id="GO:0005737">
    <property type="term" value="C:cytoplasm"/>
    <property type="evidence" value="ECO:0007669"/>
    <property type="project" value="UniProtKB-SubCell"/>
</dbReference>
<dbReference type="GO" id="GO:0016151">
    <property type="term" value="F:nickel cation binding"/>
    <property type="evidence" value="ECO:0007669"/>
    <property type="project" value="InterPro"/>
</dbReference>
<dbReference type="GO" id="GO:0009039">
    <property type="term" value="F:urease activity"/>
    <property type="evidence" value="ECO:0007669"/>
    <property type="project" value="UniProtKB-UniRule"/>
</dbReference>
<dbReference type="GO" id="GO:0043419">
    <property type="term" value="P:urea catabolic process"/>
    <property type="evidence" value="ECO:0007669"/>
    <property type="project" value="UniProtKB-UniRule"/>
</dbReference>
<dbReference type="CDD" id="cd00390">
    <property type="entry name" value="Urease_gamma"/>
    <property type="match status" value="1"/>
</dbReference>
<dbReference type="Gene3D" id="3.30.280.10">
    <property type="entry name" value="Urease, gamma-like subunit"/>
    <property type="match status" value="1"/>
</dbReference>
<dbReference type="HAMAP" id="MF_00739">
    <property type="entry name" value="Urease_gamma"/>
    <property type="match status" value="1"/>
</dbReference>
<dbReference type="InterPro" id="IPR012010">
    <property type="entry name" value="Urease_gamma"/>
</dbReference>
<dbReference type="InterPro" id="IPR002026">
    <property type="entry name" value="Urease_gamma/gamma-beta_su"/>
</dbReference>
<dbReference type="InterPro" id="IPR036463">
    <property type="entry name" value="Urease_gamma_sf"/>
</dbReference>
<dbReference type="InterPro" id="IPR050069">
    <property type="entry name" value="Urease_subunit"/>
</dbReference>
<dbReference type="NCBIfam" id="NF009712">
    <property type="entry name" value="PRK13241.1"/>
    <property type="match status" value="1"/>
</dbReference>
<dbReference type="NCBIfam" id="TIGR00193">
    <property type="entry name" value="urease_gam"/>
    <property type="match status" value="1"/>
</dbReference>
<dbReference type="PANTHER" id="PTHR33569">
    <property type="entry name" value="UREASE"/>
    <property type="match status" value="1"/>
</dbReference>
<dbReference type="PANTHER" id="PTHR33569:SF1">
    <property type="entry name" value="UREASE"/>
    <property type="match status" value="1"/>
</dbReference>
<dbReference type="Pfam" id="PF00547">
    <property type="entry name" value="Urease_gamma"/>
    <property type="match status" value="1"/>
</dbReference>
<dbReference type="PIRSF" id="PIRSF001223">
    <property type="entry name" value="Urease_gamma"/>
    <property type="match status" value="1"/>
</dbReference>
<dbReference type="SUPFAM" id="SSF54111">
    <property type="entry name" value="Urease, gamma-subunit"/>
    <property type="match status" value="1"/>
</dbReference>
<reference key="1">
    <citation type="submission" date="2006-12" db="EMBL/GenBank/DDBJ databases">
        <title>Complete sequence of Mycobacterium vanbaalenii PYR-1.</title>
        <authorList>
            <consortium name="US DOE Joint Genome Institute"/>
            <person name="Copeland A."/>
            <person name="Lucas S."/>
            <person name="Lapidus A."/>
            <person name="Barry K."/>
            <person name="Detter J.C."/>
            <person name="Glavina del Rio T."/>
            <person name="Hammon N."/>
            <person name="Israni S."/>
            <person name="Dalin E."/>
            <person name="Tice H."/>
            <person name="Pitluck S."/>
            <person name="Singan V."/>
            <person name="Schmutz J."/>
            <person name="Larimer F."/>
            <person name="Land M."/>
            <person name="Hauser L."/>
            <person name="Kyrpides N."/>
            <person name="Anderson I.J."/>
            <person name="Miller C."/>
            <person name="Richardson P."/>
        </authorList>
    </citation>
    <scope>NUCLEOTIDE SEQUENCE [LARGE SCALE GENOMIC DNA]</scope>
    <source>
        <strain>DSM 7251 / JCM 13017 / BCRC 16820 / KCTC 9966 / NRRL B-24157 / PYR-1</strain>
    </source>
</reference>
<feature type="chain" id="PRO_1000046344" description="Urease subunit gamma">
    <location>
        <begin position="1"/>
        <end position="100"/>
    </location>
</feature>
<sequence>MRLTPHEQERLLLSYAAELARRRQARGLKLNHPEAVAVITDHILEGARDGRTVAELMVSGRAVLGRADVMDGVPEMLHDVQVEATFPDGTKLVTVHHPIP</sequence>
<name>URE3_MYCVP</name>
<protein>
    <recommendedName>
        <fullName evidence="1">Urease subunit gamma</fullName>
        <ecNumber evidence="1">3.5.1.5</ecNumber>
    </recommendedName>
    <alternativeName>
        <fullName evidence="1">Urea amidohydrolase subunit gamma</fullName>
    </alternativeName>
</protein>
<proteinExistence type="inferred from homology"/>
<evidence type="ECO:0000255" key="1">
    <source>
        <dbReference type="HAMAP-Rule" id="MF_00739"/>
    </source>
</evidence>
<accession>A1T9N6</accession>
<gene>
    <name evidence="1" type="primary">ureA</name>
    <name type="ordered locus">Mvan_3084</name>
</gene>